<protein>
    <recommendedName>
        <fullName evidence="1">Large ribosomal subunit protein eL43</fullName>
    </recommendedName>
    <alternativeName>
        <fullName>50S ribosomal protein L37Ae</fullName>
    </alternativeName>
    <alternativeName>
        <fullName>Ribosomal protein L43e</fullName>
    </alternativeName>
</protein>
<sequence>MSGTKKVGSAGRFGARYGLKIRRRVAAVEAKMRQKHTCPVCGRKAVKRISTGIWQCQKCGATFAGGAYLPVTPAGKAVRRITE</sequence>
<organism>
    <name type="scientific">Pyrococcus furiosus (strain ATCC 43587 / DSM 3638 / JCM 8422 / Vc1)</name>
    <dbReference type="NCBI Taxonomy" id="186497"/>
    <lineage>
        <taxon>Archaea</taxon>
        <taxon>Methanobacteriati</taxon>
        <taxon>Methanobacteriota</taxon>
        <taxon>Thermococci</taxon>
        <taxon>Thermococcales</taxon>
        <taxon>Thermococcaceae</taxon>
        <taxon>Pyrococcus</taxon>
    </lineage>
</organism>
<accession>Q8TZI4</accession>
<keyword id="KW-0002">3D-structure</keyword>
<keyword id="KW-0479">Metal-binding</keyword>
<keyword id="KW-1185">Reference proteome</keyword>
<keyword id="KW-0687">Ribonucleoprotein</keyword>
<keyword id="KW-0689">Ribosomal protein</keyword>
<keyword id="KW-0694">RNA-binding</keyword>
<keyword id="KW-0699">rRNA-binding</keyword>
<keyword id="KW-0862">Zinc</keyword>
<keyword id="KW-0863">Zinc-finger</keyword>
<feature type="chain" id="PRO_0000139851" description="Large ribosomal subunit protein eL43">
    <location>
        <begin position="1"/>
        <end position="83"/>
    </location>
</feature>
<feature type="zinc finger region" description="C4-type" evidence="1">
    <location>
        <begin position="38"/>
        <end position="59"/>
    </location>
</feature>
<feature type="binding site" evidence="1">
    <location>
        <position position="38"/>
    </location>
    <ligand>
        <name>Zn(2+)</name>
        <dbReference type="ChEBI" id="CHEBI:29105"/>
    </ligand>
</feature>
<feature type="binding site" evidence="1">
    <location>
        <position position="41"/>
    </location>
    <ligand>
        <name>Zn(2+)</name>
        <dbReference type="ChEBI" id="CHEBI:29105"/>
    </ligand>
</feature>
<feature type="binding site" evidence="1">
    <location>
        <position position="56"/>
    </location>
    <ligand>
        <name>Zn(2+)</name>
        <dbReference type="ChEBI" id="CHEBI:29105"/>
    </ligand>
</feature>
<feature type="binding site" evidence="1">
    <location>
        <position position="59"/>
    </location>
    <ligand>
        <name>Zn(2+)</name>
        <dbReference type="ChEBI" id="CHEBI:29105"/>
    </ligand>
</feature>
<comment type="function">
    <text evidence="1">Binds to the 23S rRNA.</text>
</comment>
<comment type="cofactor">
    <cofactor evidence="1">
        <name>Zn(2+)</name>
        <dbReference type="ChEBI" id="CHEBI:29105"/>
    </cofactor>
    <text evidence="1">Binds 1 zinc ion per subunit.</text>
</comment>
<comment type="subunit">
    <text evidence="1 2">Part of the 50S ribosomal subunit.</text>
</comment>
<comment type="similarity">
    <text evidence="1">Belongs to the eukaryotic ribosomal protein eL43 family. Putative zinc-binding subfamily.</text>
</comment>
<name>RL37A_PYRFU</name>
<reference key="1">
    <citation type="journal article" date="1999" name="Genetics">
        <title>Divergence of the hyperthermophilic archaea Pyrococcus furiosus and P. horikoshii inferred from complete genomic sequences.</title>
        <authorList>
            <person name="Maeder D.L."/>
            <person name="Weiss R.B."/>
            <person name="Dunn D.M."/>
            <person name="Cherry J.L."/>
            <person name="Gonzalez J.M."/>
            <person name="DiRuggiero J."/>
            <person name="Robb F.T."/>
        </authorList>
    </citation>
    <scope>NUCLEOTIDE SEQUENCE [LARGE SCALE GENOMIC DNA]</scope>
    <source>
        <strain>ATCC 43587 / DSM 3638 / JCM 8422 / Vc1</strain>
    </source>
</reference>
<reference evidence="3" key="2">
    <citation type="journal article" date="2013" name="Nucleic Acids Res.">
        <title>Promiscuous behaviour of archaeal ribosomal proteins: implications for eukaryotic ribosome evolution.</title>
        <authorList>
            <person name="Armache J.P."/>
            <person name="Anger A.M."/>
            <person name="Marquez V."/>
            <person name="Franckenberg S."/>
            <person name="Frohlich T."/>
            <person name="Villa E."/>
            <person name="Berninghausen O."/>
            <person name="Thomm M."/>
            <person name="Arnold G.J."/>
            <person name="Beckmann R."/>
            <person name="Wilson D.N."/>
        </authorList>
    </citation>
    <scope>STRUCTURE BY ELECTRON MICROSCOPY (6.60 ANGSTROMS) IN THE 70S RIBOSOME</scope>
    <scope>SUBUNIT</scope>
</reference>
<gene>
    <name evidence="1" type="primary">rpl37ae</name>
    <name type="ordered locus">PF2008</name>
</gene>
<evidence type="ECO:0000255" key="1">
    <source>
        <dbReference type="HAMAP-Rule" id="MF_00327"/>
    </source>
</evidence>
<evidence type="ECO:0000269" key="2">
    <source>
    </source>
</evidence>
<evidence type="ECO:0007744" key="3">
    <source>
        <dbReference type="PDB" id="4V6U"/>
    </source>
</evidence>
<dbReference type="EMBL" id="AE009950">
    <property type="protein sequence ID" value="AAL82132.1"/>
    <property type="molecule type" value="Genomic_DNA"/>
</dbReference>
<dbReference type="RefSeq" id="WP_011013153.1">
    <property type="nucleotide sequence ID" value="NZ_CP023154.1"/>
</dbReference>
<dbReference type="PDB" id="4V6U">
    <property type="method" value="EM"/>
    <property type="resolution" value="6.60 A"/>
    <property type="chains" value="Bi=1-83"/>
</dbReference>
<dbReference type="PDBsum" id="4V6U"/>
<dbReference type="SMR" id="Q8TZI4"/>
<dbReference type="STRING" id="186497.PF2008"/>
<dbReference type="PaxDb" id="186497-PF2008"/>
<dbReference type="KEGG" id="pfu:PF2008"/>
<dbReference type="PATRIC" id="fig|186497.12.peg.2085"/>
<dbReference type="eggNOG" id="arCOG04208">
    <property type="taxonomic scope" value="Archaea"/>
</dbReference>
<dbReference type="HOGENOM" id="CLU_141199_2_0_2"/>
<dbReference type="OrthoDB" id="372011at2157"/>
<dbReference type="PhylomeDB" id="Q8TZI4"/>
<dbReference type="Proteomes" id="UP000001013">
    <property type="component" value="Chromosome"/>
</dbReference>
<dbReference type="GO" id="GO:1990904">
    <property type="term" value="C:ribonucleoprotein complex"/>
    <property type="evidence" value="ECO:0007669"/>
    <property type="project" value="UniProtKB-KW"/>
</dbReference>
<dbReference type="GO" id="GO:0005840">
    <property type="term" value="C:ribosome"/>
    <property type="evidence" value="ECO:0007669"/>
    <property type="project" value="UniProtKB-KW"/>
</dbReference>
<dbReference type="GO" id="GO:0070180">
    <property type="term" value="F:large ribosomal subunit rRNA binding"/>
    <property type="evidence" value="ECO:0007669"/>
    <property type="project" value="UniProtKB-UniRule"/>
</dbReference>
<dbReference type="GO" id="GO:0003735">
    <property type="term" value="F:structural constituent of ribosome"/>
    <property type="evidence" value="ECO:0007669"/>
    <property type="project" value="InterPro"/>
</dbReference>
<dbReference type="GO" id="GO:0008270">
    <property type="term" value="F:zinc ion binding"/>
    <property type="evidence" value="ECO:0007669"/>
    <property type="project" value="UniProtKB-UniRule"/>
</dbReference>
<dbReference type="GO" id="GO:0006412">
    <property type="term" value="P:translation"/>
    <property type="evidence" value="ECO:0007669"/>
    <property type="project" value="UniProtKB-UniRule"/>
</dbReference>
<dbReference type="Gene3D" id="2.20.25.30">
    <property type="match status" value="1"/>
</dbReference>
<dbReference type="HAMAP" id="MF_00327">
    <property type="entry name" value="Ribosomal_eL43"/>
    <property type="match status" value="1"/>
</dbReference>
<dbReference type="InterPro" id="IPR011331">
    <property type="entry name" value="Ribosomal_eL37/eL43"/>
</dbReference>
<dbReference type="InterPro" id="IPR002674">
    <property type="entry name" value="Ribosomal_eL43"/>
</dbReference>
<dbReference type="InterPro" id="IPR050522">
    <property type="entry name" value="Ribosomal_protein_eL43"/>
</dbReference>
<dbReference type="InterPro" id="IPR011332">
    <property type="entry name" value="Ribosomal_zn-bd"/>
</dbReference>
<dbReference type="NCBIfam" id="TIGR00280">
    <property type="entry name" value="eL43_euk_arch"/>
    <property type="match status" value="1"/>
</dbReference>
<dbReference type="NCBIfam" id="NF003058">
    <property type="entry name" value="PRK03976.1"/>
    <property type="match status" value="1"/>
</dbReference>
<dbReference type="PANTHER" id="PTHR48129">
    <property type="entry name" value="60S RIBOSOMAL PROTEIN L37A"/>
    <property type="match status" value="1"/>
</dbReference>
<dbReference type="PANTHER" id="PTHR48129:SF1">
    <property type="entry name" value="LARGE RIBOSOMAL SUBUNIT PROTEIN EL43"/>
    <property type="match status" value="1"/>
</dbReference>
<dbReference type="Pfam" id="PF01780">
    <property type="entry name" value="Ribosomal_L37ae"/>
    <property type="match status" value="1"/>
</dbReference>
<dbReference type="SUPFAM" id="SSF57829">
    <property type="entry name" value="Zn-binding ribosomal proteins"/>
    <property type="match status" value="1"/>
</dbReference>
<proteinExistence type="evidence at protein level"/>